<name>Y939_AERPE</name>
<accession>Q9YDH4</accession>
<sequence length="100" mass="11722">MGRRRSDIYEAVRRVLNYPLEDRGDYSIVYRHRVEGVGEVLREARLESVARVDKWAVHLVNGDSIPLHRIVEIRGPRGETVWRRGLGWLEDLSSRRRTAD</sequence>
<keyword id="KW-1185">Reference proteome</keyword>
<reference key="1">
    <citation type="journal article" date="1999" name="DNA Res.">
        <title>Complete genome sequence of an aerobic hyper-thermophilic crenarchaeon, Aeropyrum pernix K1.</title>
        <authorList>
            <person name="Kawarabayasi Y."/>
            <person name="Hino Y."/>
            <person name="Horikawa H."/>
            <person name="Yamazaki S."/>
            <person name="Haikawa Y."/>
            <person name="Jin-no K."/>
            <person name="Takahashi M."/>
            <person name="Sekine M."/>
            <person name="Baba S."/>
            <person name="Ankai A."/>
            <person name="Kosugi H."/>
            <person name="Hosoyama A."/>
            <person name="Fukui S."/>
            <person name="Nagai Y."/>
            <person name="Nishijima K."/>
            <person name="Nakazawa H."/>
            <person name="Takamiya M."/>
            <person name="Masuda S."/>
            <person name="Funahashi T."/>
            <person name="Tanaka T."/>
            <person name="Kudoh Y."/>
            <person name="Yamazaki J."/>
            <person name="Kushida N."/>
            <person name="Oguchi A."/>
            <person name="Aoki K."/>
            <person name="Kubota K."/>
            <person name="Nakamura Y."/>
            <person name="Nomura N."/>
            <person name="Sako Y."/>
            <person name="Kikuchi H."/>
        </authorList>
    </citation>
    <scope>NUCLEOTIDE SEQUENCE [LARGE SCALE GENOMIC DNA]</scope>
    <source>
        <strain>ATCC 700893 / DSM 11879 / JCM 9820 / NBRC 100138 / K1</strain>
    </source>
</reference>
<feature type="chain" id="PRO_0000053412" description="UPF0248 protein APE_0939">
    <location>
        <begin position="1"/>
        <end position="100"/>
    </location>
</feature>
<organism>
    <name type="scientific">Aeropyrum pernix (strain ATCC 700893 / DSM 11879 / JCM 9820 / NBRC 100138 / K1)</name>
    <dbReference type="NCBI Taxonomy" id="272557"/>
    <lineage>
        <taxon>Archaea</taxon>
        <taxon>Thermoproteota</taxon>
        <taxon>Thermoprotei</taxon>
        <taxon>Desulfurococcales</taxon>
        <taxon>Desulfurococcaceae</taxon>
        <taxon>Aeropyrum</taxon>
    </lineage>
</organism>
<comment type="similarity">
    <text evidence="1">Belongs to the UPF0248 family.</text>
</comment>
<gene>
    <name type="ordered locus">APE_0939</name>
</gene>
<protein>
    <recommendedName>
        <fullName evidence="1">UPF0248 protein APE_0939</fullName>
    </recommendedName>
</protein>
<proteinExistence type="inferred from homology"/>
<dbReference type="EMBL" id="BA000002">
    <property type="protein sequence ID" value="BAA79923.1"/>
    <property type="molecule type" value="Genomic_DNA"/>
</dbReference>
<dbReference type="PIR" id="C72690">
    <property type="entry name" value="C72690"/>
</dbReference>
<dbReference type="RefSeq" id="WP_010866079.1">
    <property type="nucleotide sequence ID" value="NC_000854.2"/>
</dbReference>
<dbReference type="STRING" id="272557.APE_0939"/>
<dbReference type="EnsemblBacteria" id="BAA79923">
    <property type="protein sequence ID" value="BAA79923"/>
    <property type="gene ID" value="APE_0939"/>
</dbReference>
<dbReference type="GeneID" id="1445018"/>
<dbReference type="KEGG" id="ape:APE_0939"/>
<dbReference type="eggNOG" id="arCOG01302">
    <property type="taxonomic scope" value="Archaea"/>
</dbReference>
<dbReference type="Proteomes" id="UP000002518">
    <property type="component" value="Chromosome"/>
</dbReference>
<dbReference type="HAMAP" id="MF_01245">
    <property type="entry name" value="UPF0248"/>
    <property type="match status" value="1"/>
</dbReference>
<dbReference type="InterPro" id="IPR040459">
    <property type="entry name" value="MJ1316"/>
</dbReference>
<dbReference type="InterPro" id="IPR007547">
    <property type="entry name" value="UPF0248"/>
</dbReference>
<dbReference type="Pfam" id="PF04457">
    <property type="entry name" value="MJ1316"/>
    <property type="match status" value="1"/>
</dbReference>
<evidence type="ECO:0000255" key="1">
    <source>
        <dbReference type="HAMAP-Rule" id="MF_01245"/>
    </source>
</evidence>